<proteinExistence type="inferred from homology"/>
<protein>
    <recommendedName>
        <fullName evidence="1">DNA-directed RNA polymerase subunit omega</fullName>
        <shortName evidence="1">RNAP omega subunit</shortName>
        <ecNumber evidence="1">2.7.7.6</ecNumber>
    </recommendedName>
    <alternativeName>
        <fullName evidence="1">RNA polymerase omega subunit</fullName>
    </alternativeName>
    <alternativeName>
        <fullName evidence="1">Transcriptase subunit omega</fullName>
    </alternativeName>
</protein>
<name>RPOZ_AFIC5</name>
<keyword id="KW-0240">DNA-directed RNA polymerase</keyword>
<keyword id="KW-0548">Nucleotidyltransferase</keyword>
<keyword id="KW-1185">Reference proteome</keyword>
<keyword id="KW-0804">Transcription</keyword>
<keyword id="KW-0808">Transferase</keyword>
<gene>
    <name evidence="1" type="primary">rpoZ</name>
    <name type="ordered locus">OCAR_5837</name>
    <name type="ordered locus">OCA5_c21800</name>
</gene>
<comment type="function">
    <text evidence="1">Promotes RNA polymerase assembly. Latches the N- and C-terminal regions of the beta' subunit thereby facilitating its interaction with the beta and alpha subunits.</text>
</comment>
<comment type="catalytic activity">
    <reaction evidence="1">
        <text>RNA(n) + a ribonucleoside 5'-triphosphate = RNA(n+1) + diphosphate</text>
        <dbReference type="Rhea" id="RHEA:21248"/>
        <dbReference type="Rhea" id="RHEA-COMP:14527"/>
        <dbReference type="Rhea" id="RHEA-COMP:17342"/>
        <dbReference type="ChEBI" id="CHEBI:33019"/>
        <dbReference type="ChEBI" id="CHEBI:61557"/>
        <dbReference type="ChEBI" id="CHEBI:140395"/>
        <dbReference type="EC" id="2.7.7.6"/>
    </reaction>
</comment>
<comment type="subunit">
    <text evidence="1">The RNAP catalytic core consists of 2 alpha, 1 beta, 1 beta' and 1 omega subunit. When a sigma factor is associated with the core the holoenzyme is formed, which can initiate transcription.</text>
</comment>
<comment type="similarity">
    <text evidence="1">Belongs to the RNA polymerase subunit omega family.</text>
</comment>
<feature type="chain" id="PRO_1000121251" description="DNA-directed RNA polymerase subunit omega">
    <location>
        <begin position="1"/>
        <end position="130"/>
    </location>
</feature>
<feature type="region of interest" description="Disordered" evidence="2">
    <location>
        <begin position="110"/>
        <end position="130"/>
    </location>
</feature>
<accession>B6JGF6</accession>
<accession>F8BXP6</accession>
<reference key="1">
    <citation type="journal article" date="2008" name="J. Bacteriol.">
        <title>Genome sequence of the chemolithoautotrophic bacterium Oligotropha carboxidovorans OM5T.</title>
        <authorList>
            <person name="Paul D."/>
            <person name="Bridges S."/>
            <person name="Burgess S.C."/>
            <person name="Dandass Y."/>
            <person name="Lawrence M.L."/>
        </authorList>
    </citation>
    <scope>NUCLEOTIDE SEQUENCE [LARGE SCALE GENOMIC DNA]</scope>
    <source>
        <strain>ATCC 49405 / DSM 1227 / KCTC 32145 / OM5</strain>
    </source>
</reference>
<reference key="2">
    <citation type="journal article" date="2011" name="J. Bacteriol.">
        <title>Complete genome sequences of the chemolithoautotrophic Oligotropha carboxidovorans strains OM4 and OM5.</title>
        <authorList>
            <person name="Volland S."/>
            <person name="Rachinger M."/>
            <person name="Strittmatter A."/>
            <person name="Daniel R."/>
            <person name="Gottschalk G."/>
            <person name="Meyer O."/>
        </authorList>
    </citation>
    <scope>NUCLEOTIDE SEQUENCE [LARGE SCALE GENOMIC DNA]</scope>
    <source>
        <strain>ATCC 49405 / DSM 1227 / KCTC 32145 / OM5</strain>
    </source>
</reference>
<evidence type="ECO:0000255" key="1">
    <source>
        <dbReference type="HAMAP-Rule" id="MF_00366"/>
    </source>
</evidence>
<evidence type="ECO:0000256" key="2">
    <source>
        <dbReference type="SAM" id="MobiDB-lite"/>
    </source>
</evidence>
<dbReference type="EC" id="2.7.7.6" evidence="1"/>
<dbReference type="EMBL" id="CP001196">
    <property type="protein sequence ID" value="ACI92962.1"/>
    <property type="molecule type" value="Genomic_DNA"/>
</dbReference>
<dbReference type="EMBL" id="CP002826">
    <property type="protein sequence ID" value="AEI06883.1"/>
    <property type="molecule type" value="Genomic_DNA"/>
</dbReference>
<dbReference type="RefSeq" id="WP_012562989.1">
    <property type="nucleotide sequence ID" value="NC_015684.1"/>
</dbReference>
<dbReference type="SMR" id="B6JGF6"/>
<dbReference type="STRING" id="504832.OCA5_c21800"/>
<dbReference type="KEGG" id="oca:OCAR_5837"/>
<dbReference type="KEGG" id="ocg:OCA5_c21800"/>
<dbReference type="PATRIC" id="fig|504832.7.peg.2302"/>
<dbReference type="eggNOG" id="COG1758">
    <property type="taxonomic scope" value="Bacteria"/>
</dbReference>
<dbReference type="HOGENOM" id="CLU_125406_2_0_5"/>
<dbReference type="OrthoDB" id="9796300at2"/>
<dbReference type="Proteomes" id="UP000007730">
    <property type="component" value="Chromosome"/>
</dbReference>
<dbReference type="GO" id="GO:0000428">
    <property type="term" value="C:DNA-directed RNA polymerase complex"/>
    <property type="evidence" value="ECO:0007669"/>
    <property type="project" value="UniProtKB-KW"/>
</dbReference>
<dbReference type="GO" id="GO:0003677">
    <property type="term" value="F:DNA binding"/>
    <property type="evidence" value="ECO:0007669"/>
    <property type="project" value="UniProtKB-UniRule"/>
</dbReference>
<dbReference type="GO" id="GO:0003899">
    <property type="term" value="F:DNA-directed RNA polymerase activity"/>
    <property type="evidence" value="ECO:0007669"/>
    <property type="project" value="UniProtKB-UniRule"/>
</dbReference>
<dbReference type="GO" id="GO:0006351">
    <property type="term" value="P:DNA-templated transcription"/>
    <property type="evidence" value="ECO:0007669"/>
    <property type="project" value="UniProtKB-UniRule"/>
</dbReference>
<dbReference type="Gene3D" id="3.90.940.10">
    <property type="match status" value="1"/>
</dbReference>
<dbReference type="HAMAP" id="MF_00366">
    <property type="entry name" value="RNApol_bact_RpoZ"/>
    <property type="match status" value="1"/>
</dbReference>
<dbReference type="InterPro" id="IPR003716">
    <property type="entry name" value="DNA-dir_RNA_pol_omega"/>
</dbReference>
<dbReference type="InterPro" id="IPR006110">
    <property type="entry name" value="Pol_omega/Rpo6/RPB6"/>
</dbReference>
<dbReference type="InterPro" id="IPR036161">
    <property type="entry name" value="RPB6/omega-like_sf"/>
</dbReference>
<dbReference type="NCBIfam" id="TIGR00690">
    <property type="entry name" value="rpoZ"/>
    <property type="match status" value="1"/>
</dbReference>
<dbReference type="PANTHER" id="PTHR34476">
    <property type="entry name" value="DNA-DIRECTED RNA POLYMERASE SUBUNIT OMEGA"/>
    <property type="match status" value="1"/>
</dbReference>
<dbReference type="PANTHER" id="PTHR34476:SF1">
    <property type="entry name" value="DNA-DIRECTED RNA POLYMERASE SUBUNIT OMEGA"/>
    <property type="match status" value="1"/>
</dbReference>
<dbReference type="Pfam" id="PF01192">
    <property type="entry name" value="RNA_pol_Rpb6"/>
    <property type="match status" value="1"/>
</dbReference>
<dbReference type="SMART" id="SM01409">
    <property type="entry name" value="RNA_pol_Rpb6"/>
    <property type="match status" value="1"/>
</dbReference>
<dbReference type="SUPFAM" id="SSF63562">
    <property type="entry name" value="RPB6/omega subunit-like"/>
    <property type="match status" value="1"/>
</dbReference>
<sequence length="130" mass="14334">MARVTVEDCIDKVDNRFDLVLLAAHRARMISSGSPITVDRDNDKNPVVSLREIADQTIAPEDLKEELVHSLQKFVEVDEPEPDTIPLIGSAGASVDADDTEVAVERMTEEELLKGLEGLAPPEEQPEEEE</sequence>
<organism>
    <name type="scientific">Afipia carboxidovorans (strain ATCC 49405 / DSM 1227 / KCTC 32145 / OM5)</name>
    <name type="common">Oligotropha carboxidovorans</name>
    <dbReference type="NCBI Taxonomy" id="504832"/>
    <lineage>
        <taxon>Bacteria</taxon>
        <taxon>Pseudomonadati</taxon>
        <taxon>Pseudomonadota</taxon>
        <taxon>Alphaproteobacteria</taxon>
        <taxon>Hyphomicrobiales</taxon>
        <taxon>Nitrobacteraceae</taxon>
        <taxon>Afipia</taxon>
    </lineage>
</organism>